<evidence type="ECO:0000255" key="1">
    <source>
        <dbReference type="HAMAP-Rule" id="MF_01369"/>
    </source>
</evidence>
<evidence type="ECO:0000305" key="2"/>
<accession>Q0RRR9</accession>
<name>RL23_FRAAA</name>
<proteinExistence type="inferred from homology"/>
<sequence length="98" mass="10946">MIPDPRDVILRPVVSEKSYGLLDENVYTFIVHPDANKTQIKLAVQQIFSVRVLRVNTINRQGKRKRTKHGWGHRSATKRALVSLAPGDTIEIFGGPGA</sequence>
<dbReference type="EMBL" id="CT573213">
    <property type="protein sequence ID" value="CAJ59748.1"/>
    <property type="molecule type" value="Genomic_DNA"/>
</dbReference>
<dbReference type="RefSeq" id="WP_009740526.1">
    <property type="nucleotide sequence ID" value="NC_008278.1"/>
</dbReference>
<dbReference type="SMR" id="Q0RRR9"/>
<dbReference type="STRING" id="326424.FRAAL1083"/>
<dbReference type="KEGG" id="fal:FRAAL1083"/>
<dbReference type="eggNOG" id="COG0089">
    <property type="taxonomic scope" value="Bacteria"/>
</dbReference>
<dbReference type="HOGENOM" id="CLU_037562_3_2_11"/>
<dbReference type="OrthoDB" id="9793353at2"/>
<dbReference type="Proteomes" id="UP000000657">
    <property type="component" value="Chromosome"/>
</dbReference>
<dbReference type="GO" id="GO:1990904">
    <property type="term" value="C:ribonucleoprotein complex"/>
    <property type="evidence" value="ECO:0007669"/>
    <property type="project" value="UniProtKB-KW"/>
</dbReference>
<dbReference type="GO" id="GO:0005840">
    <property type="term" value="C:ribosome"/>
    <property type="evidence" value="ECO:0007669"/>
    <property type="project" value="UniProtKB-KW"/>
</dbReference>
<dbReference type="GO" id="GO:0019843">
    <property type="term" value="F:rRNA binding"/>
    <property type="evidence" value="ECO:0007669"/>
    <property type="project" value="UniProtKB-UniRule"/>
</dbReference>
<dbReference type="GO" id="GO:0003735">
    <property type="term" value="F:structural constituent of ribosome"/>
    <property type="evidence" value="ECO:0007669"/>
    <property type="project" value="InterPro"/>
</dbReference>
<dbReference type="GO" id="GO:0006412">
    <property type="term" value="P:translation"/>
    <property type="evidence" value="ECO:0007669"/>
    <property type="project" value="UniProtKB-UniRule"/>
</dbReference>
<dbReference type="FunFam" id="3.30.70.330:FF:000001">
    <property type="entry name" value="50S ribosomal protein L23"/>
    <property type="match status" value="1"/>
</dbReference>
<dbReference type="Gene3D" id="3.30.70.330">
    <property type="match status" value="1"/>
</dbReference>
<dbReference type="HAMAP" id="MF_01369_B">
    <property type="entry name" value="Ribosomal_uL23_B"/>
    <property type="match status" value="1"/>
</dbReference>
<dbReference type="InterPro" id="IPR012677">
    <property type="entry name" value="Nucleotide-bd_a/b_plait_sf"/>
</dbReference>
<dbReference type="InterPro" id="IPR013025">
    <property type="entry name" value="Ribosomal_uL23-like"/>
</dbReference>
<dbReference type="InterPro" id="IPR012678">
    <property type="entry name" value="Ribosomal_uL23/eL15/eS24_sf"/>
</dbReference>
<dbReference type="NCBIfam" id="NF004363">
    <property type="entry name" value="PRK05738.2-4"/>
    <property type="match status" value="1"/>
</dbReference>
<dbReference type="NCBIfam" id="NF004364">
    <property type="entry name" value="PRK05738.2-5"/>
    <property type="match status" value="1"/>
</dbReference>
<dbReference type="PANTHER" id="PTHR11620">
    <property type="entry name" value="60S RIBOSOMAL PROTEIN L23A"/>
    <property type="match status" value="1"/>
</dbReference>
<dbReference type="Pfam" id="PF00276">
    <property type="entry name" value="Ribosomal_L23"/>
    <property type="match status" value="1"/>
</dbReference>
<dbReference type="SUPFAM" id="SSF54189">
    <property type="entry name" value="Ribosomal proteins S24e, L23 and L15e"/>
    <property type="match status" value="1"/>
</dbReference>
<feature type="chain" id="PRO_1000073442" description="Large ribosomal subunit protein uL23">
    <location>
        <begin position="1"/>
        <end position="98"/>
    </location>
</feature>
<gene>
    <name evidence="1" type="primary">rplW</name>
    <name type="ordered locus">FRAAL1083</name>
</gene>
<comment type="function">
    <text evidence="1">One of the early assembly proteins it binds 23S rRNA. One of the proteins that surrounds the polypeptide exit tunnel on the outside of the ribosome. Forms the main docking site for trigger factor binding to the ribosome.</text>
</comment>
<comment type="subunit">
    <text evidence="1">Part of the 50S ribosomal subunit. Contacts protein L29, and trigger factor when it is bound to the ribosome.</text>
</comment>
<comment type="similarity">
    <text evidence="1">Belongs to the universal ribosomal protein uL23 family.</text>
</comment>
<organism>
    <name type="scientific">Frankia alni (strain DSM 45986 / CECT 9034 / ACN14a)</name>
    <dbReference type="NCBI Taxonomy" id="326424"/>
    <lineage>
        <taxon>Bacteria</taxon>
        <taxon>Bacillati</taxon>
        <taxon>Actinomycetota</taxon>
        <taxon>Actinomycetes</taxon>
        <taxon>Frankiales</taxon>
        <taxon>Frankiaceae</taxon>
        <taxon>Frankia</taxon>
    </lineage>
</organism>
<keyword id="KW-1185">Reference proteome</keyword>
<keyword id="KW-0687">Ribonucleoprotein</keyword>
<keyword id="KW-0689">Ribosomal protein</keyword>
<keyword id="KW-0694">RNA-binding</keyword>
<keyword id="KW-0699">rRNA-binding</keyword>
<reference key="1">
    <citation type="journal article" date="2007" name="Genome Res.">
        <title>Genome characteristics of facultatively symbiotic Frankia sp. strains reflect host range and host plant biogeography.</title>
        <authorList>
            <person name="Normand P."/>
            <person name="Lapierre P."/>
            <person name="Tisa L.S."/>
            <person name="Gogarten J.P."/>
            <person name="Alloisio N."/>
            <person name="Bagnarol E."/>
            <person name="Bassi C.A."/>
            <person name="Berry A.M."/>
            <person name="Bickhart D.M."/>
            <person name="Choisne N."/>
            <person name="Couloux A."/>
            <person name="Cournoyer B."/>
            <person name="Cruveiller S."/>
            <person name="Daubin V."/>
            <person name="Demange N."/>
            <person name="Francino M.P."/>
            <person name="Goltsman E."/>
            <person name="Huang Y."/>
            <person name="Kopp O.R."/>
            <person name="Labarre L."/>
            <person name="Lapidus A."/>
            <person name="Lavire C."/>
            <person name="Marechal J."/>
            <person name="Martinez M."/>
            <person name="Mastronunzio J.E."/>
            <person name="Mullin B.C."/>
            <person name="Niemann J."/>
            <person name="Pujic P."/>
            <person name="Rawnsley T."/>
            <person name="Rouy Z."/>
            <person name="Schenowitz C."/>
            <person name="Sellstedt A."/>
            <person name="Tavares F."/>
            <person name="Tomkins J.P."/>
            <person name="Vallenet D."/>
            <person name="Valverde C."/>
            <person name="Wall L.G."/>
            <person name="Wang Y."/>
            <person name="Medigue C."/>
            <person name="Benson D.R."/>
        </authorList>
    </citation>
    <scope>NUCLEOTIDE SEQUENCE [LARGE SCALE GENOMIC DNA]</scope>
    <source>
        <strain>DSM 45986 / CECT 9034 / ACN14a</strain>
    </source>
</reference>
<protein>
    <recommendedName>
        <fullName evidence="1">Large ribosomal subunit protein uL23</fullName>
    </recommendedName>
    <alternativeName>
        <fullName evidence="2">50S ribosomal protein L23</fullName>
    </alternativeName>
</protein>